<reference key="1">
    <citation type="journal article" date="2009" name="PLoS Genet.">
        <title>Organised genome dynamics in the Escherichia coli species results in highly diverse adaptive paths.</title>
        <authorList>
            <person name="Touchon M."/>
            <person name="Hoede C."/>
            <person name="Tenaillon O."/>
            <person name="Barbe V."/>
            <person name="Baeriswyl S."/>
            <person name="Bidet P."/>
            <person name="Bingen E."/>
            <person name="Bonacorsi S."/>
            <person name="Bouchier C."/>
            <person name="Bouvet O."/>
            <person name="Calteau A."/>
            <person name="Chiapello H."/>
            <person name="Clermont O."/>
            <person name="Cruveiller S."/>
            <person name="Danchin A."/>
            <person name="Diard M."/>
            <person name="Dossat C."/>
            <person name="Karoui M.E."/>
            <person name="Frapy E."/>
            <person name="Garry L."/>
            <person name="Ghigo J.M."/>
            <person name="Gilles A.M."/>
            <person name="Johnson J."/>
            <person name="Le Bouguenec C."/>
            <person name="Lescat M."/>
            <person name="Mangenot S."/>
            <person name="Martinez-Jehanne V."/>
            <person name="Matic I."/>
            <person name="Nassif X."/>
            <person name="Oztas S."/>
            <person name="Petit M.A."/>
            <person name="Pichon C."/>
            <person name="Rouy Z."/>
            <person name="Ruf C.S."/>
            <person name="Schneider D."/>
            <person name="Tourret J."/>
            <person name="Vacherie B."/>
            <person name="Vallenet D."/>
            <person name="Medigue C."/>
            <person name="Rocha E.P.C."/>
            <person name="Denamur E."/>
        </authorList>
    </citation>
    <scope>NUCLEOTIDE SEQUENCE [LARGE SCALE GENOMIC DNA]</scope>
    <source>
        <strain>ATCC 35469 / DSM 13698 / BCRC 15582 / CCUG 18766 / IAM 14443 / JCM 21226 / LMG 7866 / NBRC 102419 / NCTC 12128 / CDC 0568-73</strain>
    </source>
</reference>
<organism>
    <name type="scientific">Escherichia fergusonii (strain ATCC 35469 / DSM 13698 / CCUG 18766 / IAM 14443 / JCM 21226 / LMG 7866 / NBRC 102419 / NCTC 12128 / CDC 0568-73)</name>
    <dbReference type="NCBI Taxonomy" id="585054"/>
    <lineage>
        <taxon>Bacteria</taxon>
        <taxon>Pseudomonadati</taxon>
        <taxon>Pseudomonadota</taxon>
        <taxon>Gammaproteobacteria</taxon>
        <taxon>Enterobacterales</taxon>
        <taxon>Enterobacteriaceae</taxon>
        <taxon>Escherichia</taxon>
    </lineage>
</organism>
<name>RS7_ESCF3</name>
<evidence type="ECO:0000255" key="1">
    <source>
        <dbReference type="HAMAP-Rule" id="MF_00480"/>
    </source>
</evidence>
<evidence type="ECO:0000305" key="2"/>
<sequence>MPRRRVIGQRKILPDPKFGSELLAKFVNILMVDGKKSTAESIVYSALETLAQRSGKSELEAFEVALENVRPTVEVKSRRVGGSTYQVPVEVRPVRRNALAMRWIVEAARKRGDKSMALRLANELSDAAENKGTAVKKREDVHRMAEANKAFAHYRW</sequence>
<keyword id="KW-0687">Ribonucleoprotein</keyword>
<keyword id="KW-0689">Ribosomal protein</keyword>
<keyword id="KW-0694">RNA-binding</keyword>
<keyword id="KW-0699">rRNA-binding</keyword>
<keyword id="KW-0820">tRNA-binding</keyword>
<dbReference type="EMBL" id="CU928158">
    <property type="protein sequence ID" value="CAQ90790.1"/>
    <property type="molecule type" value="Genomic_DNA"/>
</dbReference>
<dbReference type="RefSeq" id="WP_001138043.1">
    <property type="nucleotide sequence ID" value="NC_011740.1"/>
</dbReference>
<dbReference type="SMR" id="B7LS47"/>
<dbReference type="GeneID" id="93778657"/>
<dbReference type="KEGG" id="efe:EFER_3311"/>
<dbReference type="HOGENOM" id="CLU_072226_1_1_6"/>
<dbReference type="OrthoDB" id="9807653at2"/>
<dbReference type="Proteomes" id="UP000000745">
    <property type="component" value="Chromosome"/>
</dbReference>
<dbReference type="GO" id="GO:0015935">
    <property type="term" value="C:small ribosomal subunit"/>
    <property type="evidence" value="ECO:0007669"/>
    <property type="project" value="InterPro"/>
</dbReference>
<dbReference type="GO" id="GO:0019843">
    <property type="term" value="F:rRNA binding"/>
    <property type="evidence" value="ECO:0007669"/>
    <property type="project" value="UniProtKB-UniRule"/>
</dbReference>
<dbReference type="GO" id="GO:0003735">
    <property type="term" value="F:structural constituent of ribosome"/>
    <property type="evidence" value="ECO:0007669"/>
    <property type="project" value="InterPro"/>
</dbReference>
<dbReference type="GO" id="GO:0000049">
    <property type="term" value="F:tRNA binding"/>
    <property type="evidence" value="ECO:0007669"/>
    <property type="project" value="UniProtKB-UniRule"/>
</dbReference>
<dbReference type="GO" id="GO:0006412">
    <property type="term" value="P:translation"/>
    <property type="evidence" value="ECO:0007669"/>
    <property type="project" value="UniProtKB-UniRule"/>
</dbReference>
<dbReference type="CDD" id="cd14869">
    <property type="entry name" value="uS7_Bacteria"/>
    <property type="match status" value="1"/>
</dbReference>
<dbReference type="FunFam" id="1.10.455.10:FF:000001">
    <property type="entry name" value="30S ribosomal protein S7"/>
    <property type="match status" value="1"/>
</dbReference>
<dbReference type="Gene3D" id="1.10.455.10">
    <property type="entry name" value="Ribosomal protein S7 domain"/>
    <property type="match status" value="1"/>
</dbReference>
<dbReference type="HAMAP" id="MF_00480_B">
    <property type="entry name" value="Ribosomal_uS7_B"/>
    <property type="match status" value="1"/>
</dbReference>
<dbReference type="InterPro" id="IPR000235">
    <property type="entry name" value="Ribosomal_uS7"/>
</dbReference>
<dbReference type="InterPro" id="IPR005717">
    <property type="entry name" value="Ribosomal_uS7_bac/org-type"/>
</dbReference>
<dbReference type="InterPro" id="IPR020606">
    <property type="entry name" value="Ribosomal_uS7_CS"/>
</dbReference>
<dbReference type="InterPro" id="IPR023798">
    <property type="entry name" value="Ribosomal_uS7_dom"/>
</dbReference>
<dbReference type="InterPro" id="IPR036823">
    <property type="entry name" value="Ribosomal_uS7_dom_sf"/>
</dbReference>
<dbReference type="NCBIfam" id="TIGR01029">
    <property type="entry name" value="rpsG_bact"/>
    <property type="match status" value="1"/>
</dbReference>
<dbReference type="PANTHER" id="PTHR11205">
    <property type="entry name" value="RIBOSOMAL PROTEIN S7"/>
    <property type="match status" value="1"/>
</dbReference>
<dbReference type="Pfam" id="PF00177">
    <property type="entry name" value="Ribosomal_S7"/>
    <property type="match status" value="1"/>
</dbReference>
<dbReference type="PIRSF" id="PIRSF002122">
    <property type="entry name" value="RPS7p_RPS7a_RPS5e_RPS7o"/>
    <property type="match status" value="1"/>
</dbReference>
<dbReference type="SUPFAM" id="SSF47973">
    <property type="entry name" value="Ribosomal protein S7"/>
    <property type="match status" value="1"/>
</dbReference>
<dbReference type="PROSITE" id="PS00052">
    <property type="entry name" value="RIBOSOMAL_S7"/>
    <property type="match status" value="1"/>
</dbReference>
<comment type="function">
    <text evidence="1">One of the primary rRNA binding proteins, it binds directly to 16S rRNA where it nucleates assembly of the head domain of the 30S subunit. Is located at the subunit interface close to the decoding center, probably blocks exit of the E-site tRNA.</text>
</comment>
<comment type="subunit">
    <text evidence="1">Part of the 30S ribosomal subunit. Contacts proteins S9 and S11.</text>
</comment>
<comment type="similarity">
    <text evidence="1">Belongs to the universal ribosomal protein uS7 family.</text>
</comment>
<feature type="chain" id="PRO_1000125946" description="Small ribosomal subunit protein uS7">
    <location>
        <begin position="1"/>
        <end position="156"/>
    </location>
</feature>
<gene>
    <name evidence="1" type="primary">rpsG</name>
    <name type="ordered locus">EFER_3311</name>
</gene>
<accession>B7LS47</accession>
<proteinExistence type="inferred from homology"/>
<protein>
    <recommendedName>
        <fullName evidence="1">Small ribosomal subunit protein uS7</fullName>
    </recommendedName>
    <alternativeName>
        <fullName evidence="2">30S ribosomal protein S7</fullName>
    </alternativeName>
</protein>